<proteinExistence type="inferred from homology"/>
<comment type="function">
    <text evidence="1">Catalyzes carboxymethyl transfer from carboxy-S-adenosyl-L-methionine (Cx-SAM) to 5-hydroxyuridine (ho5U) to form 5-carboxymethoxyuridine (cmo5U) at position 34 in tRNAs.</text>
</comment>
<comment type="catalytic activity">
    <reaction evidence="1">
        <text>carboxy-S-adenosyl-L-methionine + 5-hydroxyuridine(34) in tRNA = 5-carboxymethoxyuridine(34) in tRNA + S-adenosyl-L-homocysteine + H(+)</text>
        <dbReference type="Rhea" id="RHEA:52848"/>
        <dbReference type="Rhea" id="RHEA-COMP:13381"/>
        <dbReference type="Rhea" id="RHEA-COMP:13383"/>
        <dbReference type="ChEBI" id="CHEBI:15378"/>
        <dbReference type="ChEBI" id="CHEBI:57856"/>
        <dbReference type="ChEBI" id="CHEBI:134278"/>
        <dbReference type="ChEBI" id="CHEBI:136877"/>
        <dbReference type="ChEBI" id="CHEBI:136879"/>
    </reaction>
</comment>
<comment type="subunit">
    <text evidence="1">Homotetramer.</text>
</comment>
<comment type="similarity">
    <text evidence="1">Belongs to the class I-like SAM-binding methyltransferase superfamily. CmoB family.</text>
</comment>
<gene>
    <name evidence="1" type="primary">cmoB</name>
    <name type="ordered locus">PSPA7_4745</name>
</gene>
<keyword id="KW-0808">Transferase</keyword>
<keyword id="KW-0819">tRNA processing</keyword>
<feature type="chain" id="PRO_1000069330" description="tRNA U34 carboxymethyltransferase">
    <location>
        <begin position="1"/>
        <end position="322"/>
    </location>
</feature>
<feature type="binding site" evidence="1">
    <location>
        <position position="91"/>
    </location>
    <ligand>
        <name>carboxy-S-adenosyl-L-methionine</name>
        <dbReference type="ChEBI" id="CHEBI:134278"/>
    </ligand>
</feature>
<feature type="binding site" evidence="1">
    <location>
        <position position="105"/>
    </location>
    <ligand>
        <name>carboxy-S-adenosyl-L-methionine</name>
        <dbReference type="ChEBI" id="CHEBI:134278"/>
    </ligand>
</feature>
<feature type="binding site" evidence="1">
    <location>
        <position position="110"/>
    </location>
    <ligand>
        <name>carboxy-S-adenosyl-L-methionine</name>
        <dbReference type="ChEBI" id="CHEBI:134278"/>
    </ligand>
</feature>
<feature type="binding site" evidence="1">
    <location>
        <position position="129"/>
    </location>
    <ligand>
        <name>carboxy-S-adenosyl-L-methionine</name>
        <dbReference type="ChEBI" id="CHEBI:134278"/>
    </ligand>
</feature>
<feature type="binding site" evidence="1">
    <location>
        <begin position="179"/>
        <end position="180"/>
    </location>
    <ligand>
        <name>carboxy-S-adenosyl-L-methionine</name>
        <dbReference type="ChEBI" id="CHEBI:134278"/>
    </ligand>
</feature>
<feature type="binding site" evidence="1">
    <location>
        <position position="195"/>
    </location>
    <ligand>
        <name>carboxy-S-adenosyl-L-methionine</name>
        <dbReference type="ChEBI" id="CHEBI:134278"/>
    </ligand>
</feature>
<feature type="binding site" evidence="1">
    <location>
        <position position="199"/>
    </location>
    <ligand>
        <name>carboxy-S-adenosyl-L-methionine</name>
        <dbReference type="ChEBI" id="CHEBI:134278"/>
    </ligand>
</feature>
<feature type="binding site" evidence="1">
    <location>
        <position position="314"/>
    </location>
    <ligand>
        <name>carboxy-S-adenosyl-L-methionine</name>
        <dbReference type="ChEBI" id="CHEBI:134278"/>
    </ligand>
</feature>
<protein>
    <recommendedName>
        <fullName evidence="1">tRNA U34 carboxymethyltransferase</fullName>
        <ecNumber evidence="1">2.5.1.-</ecNumber>
    </recommendedName>
</protein>
<organism>
    <name type="scientific">Pseudomonas paraeruginosa (strain DSM 24068 / PA7)</name>
    <name type="common">Pseudomonas aeruginosa (strain PA7)</name>
    <dbReference type="NCBI Taxonomy" id="381754"/>
    <lineage>
        <taxon>Bacteria</taxon>
        <taxon>Pseudomonadati</taxon>
        <taxon>Pseudomonadota</taxon>
        <taxon>Gammaproteobacteria</taxon>
        <taxon>Pseudomonadales</taxon>
        <taxon>Pseudomonadaceae</taxon>
        <taxon>Pseudomonas</taxon>
        <taxon>Pseudomonas paraeruginosa</taxon>
    </lineage>
</organism>
<sequence length="322" mass="36438">MIQHLALDALQRHLAGSPLYAWATSLPAQIAARIEEGHGDLARWWSAVQRLPQVQAPTVELAGRFALHSERDAALQPQVKEALQGLIPWRKGPFDFFGVQVDTEWRSDWKWSRVSPHVDLRGKRILDVGCGNGYYQWRMLGAGAESVIGIDPNWLFLCQFLAAKRYLADLPAWHLPLALEDLPEKLEGFDTLFSMGVLYHRRSPIDHLLALKDCLKRGGELVLETLVVEGDASTVLVPEDRYAQMRNVWFLPSVAALELWLRRAGFADARCVDVSLTSVEEQRATEWMRFQSLPEFLDPQDRSRTVEGLPAPMRATLVARKP</sequence>
<reference key="1">
    <citation type="submission" date="2007-06" db="EMBL/GenBank/DDBJ databases">
        <authorList>
            <person name="Dodson R.J."/>
            <person name="Harkins D."/>
            <person name="Paulsen I.T."/>
        </authorList>
    </citation>
    <scope>NUCLEOTIDE SEQUENCE [LARGE SCALE GENOMIC DNA]</scope>
    <source>
        <strain>DSM 24068 / PA7</strain>
    </source>
</reference>
<name>CMOB_PSEP7</name>
<dbReference type="EC" id="2.5.1.-" evidence="1"/>
<dbReference type="EMBL" id="CP000744">
    <property type="protein sequence ID" value="ABR82975.1"/>
    <property type="molecule type" value="Genomic_DNA"/>
</dbReference>
<dbReference type="RefSeq" id="WP_003150227.1">
    <property type="nucleotide sequence ID" value="NC_009656.1"/>
</dbReference>
<dbReference type="SMR" id="A6VAK2"/>
<dbReference type="GeneID" id="77222657"/>
<dbReference type="KEGG" id="pap:PSPA7_4745"/>
<dbReference type="HOGENOM" id="CLU_052665_0_0_6"/>
<dbReference type="Proteomes" id="UP000001582">
    <property type="component" value="Chromosome"/>
</dbReference>
<dbReference type="GO" id="GO:0008168">
    <property type="term" value="F:methyltransferase activity"/>
    <property type="evidence" value="ECO:0007669"/>
    <property type="project" value="TreeGrafter"/>
</dbReference>
<dbReference type="GO" id="GO:0016765">
    <property type="term" value="F:transferase activity, transferring alkyl or aryl (other than methyl) groups"/>
    <property type="evidence" value="ECO:0007669"/>
    <property type="project" value="UniProtKB-UniRule"/>
</dbReference>
<dbReference type="GO" id="GO:0002098">
    <property type="term" value="P:tRNA wobble uridine modification"/>
    <property type="evidence" value="ECO:0007669"/>
    <property type="project" value="InterPro"/>
</dbReference>
<dbReference type="CDD" id="cd02440">
    <property type="entry name" value="AdoMet_MTases"/>
    <property type="match status" value="1"/>
</dbReference>
<dbReference type="Gene3D" id="3.40.50.150">
    <property type="entry name" value="Vaccinia Virus protein VP39"/>
    <property type="match status" value="1"/>
</dbReference>
<dbReference type="HAMAP" id="MF_01590">
    <property type="entry name" value="tRNA_carboxymethyltr_CmoB"/>
    <property type="match status" value="1"/>
</dbReference>
<dbReference type="InterPro" id="IPR010017">
    <property type="entry name" value="CmoB"/>
</dbReference>
<dbReference type="InterPro" id="IPR027555">
    <property type="entry name" value="Mo5U34_MeTrfas-like"/>
</dbReference>
<dbReference type="InterPro" id="IPR029063">
    <property type="entry name" value="SAM-dependent_MTases_sf"/>
</dbReference>
<dbReference type="NCBIfam" id="NF011650">
    <property type="entry name" value="PRK15068.1"/>
    <property type="match status" value="1"/>
</dbReference>
<dbReference type="NCBIfam" id="TIGR00452">
    <property type="entry name" value="tRNA 5-methoxyuridine(34)/uridine 5-oxyacetic acid(34) synthase CmoB"/>
    <property type="match status" value="1"/>
</dbReference>
<dbReference type="PANTHER" id="PTHR43464">
    <property type="entry name" value="METHYLTRANSFERASE"/>
    <property type="match status" value="1"/>
</dbReference>
<dbReference type="PANTHER" id="PTHR43464:SF95">
    <property type="entry name" value="TRNA U34 CARBOXYMETHYLTRANSFERASE"/>
    <property type="match status" value="1"/>
</dbReference>
<dbReference type="Pfam" id="PF08003">
    <property type="entry name" value="Methyltransf_9"/>
    <property type="match status" value="1"/>
</dbReference>
<dbReference type="SUPFAM" id="SSF53335">
    <property type="entry name" value="S-adenosyl-L-methionine-dependent methyltransferases"/>
    <property type="match status" value="1"/>
</dbReference>
<evidence type="ECO:0000255" key="1">
    <source>
        <dbReference type="HAMAP-Rule" id="MF_01590"/>
    </source>
</evidence>
<accession>A6VAK2</accession>